<accession>B6I2P6</accession>
<keyword id="KW-0997">Cell inner membrane</keyword>
<keyword id="KW-1003">Cell membrane</keyword>
<keyword id="KW-0472">Membrane</keyword>
<keyword id="KW-0812">Transmembrane</keyword>
<keyword id="KW-1133">Transmembrane helix</keyword>
<keyword id="KW-0813">Transport</keyword>
<dbReference type="EMBL" id="AP009240">
    <property type="protein sequence ID" value="BAG80163.1"/>
    <property type="molecule type" value="Genomic_DNA"/>
</dbReference>
<dbReference type="RefSeq" id="WP_000538177.1">
    <property type="nucleotide sequence ID" value="NC_011415.1"/>
</dbReference>
<dbReference type="KEGG" id="ecy:ECSE_4639"/>
<dbReference type="HOGENOM" id="CLU_117642_1_0_6"/>
<dbReference type="Proteomes" id="UP000008199">
    <property type="component" value="Chromosome"/>
</dbReference>
<dbReference type="GO" id="GO:0005886">
    <property type="term" value="C:plasma membrane"/>
    <property type="evidence" value="ECO:0007669"/>
    <property type="project" value="UniProtKB-SubCell"/>
</dbReference>
<dbReference type="GO" id="GO:0015744">
    <property type="term" value="P:succinate transport"/>
    <property type="evidence" value="ECO:0007669"/>
    <property type="project" value="UniProtKB-UniRule"/>
</dbReference>
<dbReference type="HAMAP" id="MF_01191">
    <property type="entry name" value="YjjB"/>
    <property type="match status" value="1"/>
</dbReference>
<dbReference type="InterPro" id="IPR024528">
    <property type="entry name" value="ThrE_2"/>
</dbReference>
<dbReference type="InterPro" id="IPR050539">
    <property type="entry name" value="ThrE_Dicarb/AminoAcid_Exp"/>
</dbReference>
<dbReference type="InterPro" id="IPR020914">
    <property type="entry name" value="YjjB"/>
</dbReference>
<dbReference type="NCBIfam" id="NF007391">
    <property type="entry name" value="PRK09917.1"/>
    <property type="match status" value="1"/>
</dbReference>
<dbReference type="PANTHER" id="PTHR34390:SF1">
    <property type="entry name" value="SUCCINATE TRANSPORTER SUBUNIT YJJB-RELATED"/>
    <property type="match status" value="1"/>
</dbReference>
<dbReference type="PANTHER" id="PTHR34390">
    <property type="entry name" value="UPF0442 PROTEIN YJJB-RELATED"/>
    <property type="match status" value="1"/>
</dbReference>
<dbReference type="Pfam" id="PF12821">
    <property type="entry name" value="ThrE_2"/>
    <property type="match status" value="1"/>
</dbReference>
<organism>
    <name type="scientific">Escherichia coli (strain SE11)</name>
    <dbReference type="NCBI Taxonomy" id="409438"/>
    <lineage>
        <taxon>Bacteria</taxon>
        <taxon>Pseudomonadati</taxon>
        <taxon>Pseudomonadota</taxon>
        <taxon>Gammaproteobacteria</taxon>
        <taxon>Enterobacterales</taxon>
        <taxon>Enterobacteriaceae</taxon>
        <taxon>Escherichia</taxon>
    </lineage>
</organism>
<name>YJJB_ECOSE</name>
<proteinExistence type="inferred from homology"/>
<reference key="1">
    <citation type="journal article" date="2008" name="DNA Res.">
        <title>Complete genome sequence and comparative analysis of the wild-type commensal Escherichia coli strain SE11 isolated from a healthy adult.</title>
        <authorList>
            <person name="Oshima K."/>
            <person name="Toh H."/>
            <person name="Ogura Y."/>
            <person name="Sasamoto H."/>
            <person name="Morita H."/>
            <person name="Park S.-H."/>
            <person name="Ooka T."/>
            <person name="Iyoda S."/>
            <person name="Taylor T.D."/>
            <person name="Hayashi T."/>
            <person name="Itoh K."/>
            <person name="Hattori M."/>
        </authorList>
    </citation>
    <scope>NUCLEOTIDE SEQUENCE [LARGE SCALE GENOMIC DNA]</scope>
    <source>
        <strain>SE11</strain>
    </source>
</reference>
<evidence type="ECO:0000255" key="1">
    <source>
        <dbReference type="HAMAP-Rule" id="MF_01191"/>
    </source>
</evidence>
<feature type="chain" id="PRO_1000138366" description="Probable succinate transporter subunit YjjB">
    <location>
        <begin position="1"/>
        <end position="157"/>
    </location>
</feature>
<feature type="transmembrane region" description="Helical" evidence="1">
    <location>
        <begin position="8"/>
        <end position="28"/>
    </location>
</feature>
<feature type="transmembrane region" description="Helical" evidence="1">
    <location>
        <begin position="50"/>
        <end position="70"/>
    </location>
</feature>
<feature type="transmembrane region" description="Helical" evidence="1">
    <location>
        <begin position="87"/>
        <end position="107"/>
    </location>
</feature>
<feature type="transmembrane region" description="Helical" evidence="1">
    <location>
        <begin position="129"/>
        <end position="149"/>
    </location>
</feature>
<gene>
    <name evidence="1" type="primary">yjjB</name>
    <name type="ordered locus">ECSE_4639</name>
</gene>
<protein>
    <recommendedName>
        <fullName evidence="1">Probable succinate transporter subunit YjjB</fullName>
    </recommendedName>
</protein>
<sequence length="157" mass="17055">MGVIEFLFALAQDMILAAIPAVGFAMVFNVPVRALRWCALLGAIGHGSRMILMTSGLNIEWSTFMASMLVGTIGIQWSRWYLAHPKVFTVAAVIPMFPGISAYTAMISAVKISQLGYSESLMITLLTNFLTASSIVGALSIGLSIPGLWLYRKRPRV</sequence>
<comment type="function">
    <text evidence="1">Involved in succinate export with YjjP. Both proteins are required for export.</text>
</comment>
<comment type="subunit">
    <text evidence="1">The transporter is composed of YjjB and YjjP.</text>
</comment>
<comment type="subcellular location">
    <subcellularLocation>
        <location evidence="1">Cell inner membrane</location>
        <topology evidence="1">Multi-pass membrane protein</topology>
    </subcellularLocation>
</comment>
<comment type="similarity">
    <text evidence="1">Belongs to the ThrE exporter (TC 2.A.79) family.</text>
</comment>